<name>PETL_DAUCA</name>
<feature type="chain" id="PRO_0000275523" description="Cytochrome b6-f complex subunit 6">
    <location>
        <begin position="1"/>
        <end position="31"/>
    </location>
</feature>
<feature type="transmembrane region" description="Helical" evidence="1">
    <location>
        <begin position="4"/>
        <end position="26"/>
    </location>
</feature>
<reference key="1">
    <citation type="journal article" date="2006" name="BMC Genomics">
        <title>Complete plastid genome sequence of Daucus carota: implications for biotechnology and phylogeny of angiosperms.</title>
        <authorList>
            <person name="Ruhlman T."/>
            <person name="Lee S.-B."/>
            <person name="Jansen R.K."/>
            <person name="Hostetler J.B."/>
            <person name="Tallon L.J."/>
            <person name="Town C.D."/>
            <person name="Daniell H."/>
        </authorList>
    </citation>
    <scope>NUCLEOTIDE SEQUENCE [LARGE SCALE GENOMIC DNA]</scope>
    <source>
        <strain>cv. Danvers Half-long</strain>
    </source>
</reference>
<dbReference type="EMBL" id="DQ898156">
    <property type="protein sequence ID" value="ABI32442.1"/>
    <property type="molecule type" value="Genomic_DNA"/>
</dbReference>
<dbReference type="RefSeq" id="YP_740135.1">
    <property type="nucleotide sequence ID" value="NC_008325.1"/>
</dbReference>
<dbReference type="SMR" id="Q0G9U4"/>
<dbReference type="GeneID" id="4266761"/>
<dbReference type="GO" id="GO:0009535">
    <property type="term" value="C:chloroplast thylakoid membrane"/>
    <property type="evidence" value="ECO:0007669"/>
    <property type="project" value="UniProtKB-SubCell"/>
</dbReference>
<dbReference type="GO" id="GO:0009512">
    <property type="term" value="C:cytochrome b6f complex"/>
    <property type="evidence" value="ECO:0007669"/>
    <property type="project" value="InterPro"/>
</dbReference>
<dbReference type="GO" id="GO:0045158">
    <property type="term" value="F:electron transporter, transferring electrons within cytochrome b6/f complex of photosystem II activity"/>
    <property type="evidence" value="ECO:0007669"/>
    <property type="project" value="UniProtKB-UniRule"/>
</dbReference>
<dbReference type="GO" id="GO:0015979">
    <property type="term" value="P:photosynthesis"/>
    <property type="evidence" value="ECO:0007669"/>
    <property type="project" value="UniProtKB-KW"/>
</dbReference>
<dbReference type="HAMAP" id="MF_00433">
    <property type="entry name" value="Cytb6_f_PetL"/>
    <property type="match status" value="1"/>
</dbReference>
<dbReference type="InterPro" id="IPR007802">
    <property type="entry name" value="Cyt_b6/f_cplx_su6"/>
</dbReference>
<dbReference type="PANTHER" id="PTHR37266">
    <property type="entry name" value="CYTOCHROME B6-F COMPLEX SUBUNIT 6"/>
    <property type="match status" value="1"/>
</dbReference>
<dbReference type="PANTHER" id="PTHR37266:SF1">
    <property type="entry name" value="CYTOCHROME B6-F COMPLEX SUBUNIT 6"/>
    <property type="match status" value="1"/>
</dbReference>
<dbReference type="Pfam" id="PF05115">
    <property type="entry name" value="PetL"/>
    <property type="match status" value="1"/>
</dbReference>
<dbReference type="SUPFAM" id="SSF103436">
    <property type="entry name" value="PetL subunit of the cytochrome b6f complex"/>
    <property type="match status" value="1"/>
</dbReference>
<protein>
    <recommendedName>
        <fullName evidence="1">Cytochrome b6-f complex subunit 6</fullName>
    </recommendedName>
    <alternativeName>
        <fullName evidence="1">Cytochrome b6-f complex subunit PetL</fullName>
    </alternativeName>
    <alternativeName>
        <fullName evidence="1">Cytochrome b6-f complex subunit VI</fullName>
    </alternativeName>
</protein>
<proteinExistence type="inferred from homology"/>
<gene>
    <name evidence="1" type="primary">petL</name>
</gene>
<sequence length="31" mass="3359">MPTITSYFGFLLAALTVTSALFIGLSKIRLI</sequence>
<evidence type="ECO:0000255" key="1">
    <source>
        <dbReference type="HAMAP-Rule" id="MF_00433"/>
    </source>
</evidence>
<keyword id="KW-0150">Chloroplast</keyword>
<keyword id="KW-0249">Electron transport</keyword>
<keyword id="KW-0472">Membrane</keyword>
<keyword id="KW-0602">Photosynthesis</keyword>
<keyword id="KW-0934">Plastid</keyword>
<keyword id="KW-0793">Thylakoid</keyword>
<keyword id="KW-0812">Transmembrane</keyword>
<keyword id="KW-1133">Transmembrane helix</keyword>
<keyword id="KW-0813">Transport</keyword>
<comment type="function">
    <text evidence="1">Component of the cytochrome b6-f complex, which mediates electron transfer between photosystem II (PSII) and photosystem I (PSI), cyclic electron flow around PSI, and state transitions. PetL is important for photoautotrophic growth as well as for electron transfer efficiency and stability of the cytochrome b6-f complex.</text>
</comment>
<comment type="subunit">
    <text evidence="1">The 4 large subunits of the cytochrome b6-f complex are cytochrome b6, subunit IV (17 kDa polypeptide, PetD), cytochrome f and the Rieske protein, while the 4 small subunits are PetG, PetL, PetM and PetN. The complex functions as a dimer.</text>
</comment>
<comment type="subcellular location">
    <subcellularLocation>
        <location evidence="1">Plastid</location>
        <location evidence="1">Chloroplast thylakoid membrane</location>
        <topology evidence="1">Single-pass membrane protein</topology>
    </subcellularLocation>
</comment>
<comment type="similarity">
    <text evidence="1">Belongs to the PetL family.</text>
</comment>
<accession>Q0G9U4</accession>
<organism>
    <name type="scientific">Daucus carota</name>
    <name type="common">Wild carrot</name>
    <dbReference type="NCBI Taxonomy" id="4039"/>
    <lineage>
        <taxon>Eukaryota</taxon>
        <taxon>Viridiplantae</taxon>
        <taxon>Streptophyta</taxon>
        <taxon>Embryophyta</taxon>
        <taxon>Tracheophyta</taxon>
        <taxon>Spermatophyta</taxon>
        <taxon>Magnoliopsida</taxon>
        <taxon>eudicotyledons</taxon>
        <taxon>Gunneridae</taxon>
        <taxon>Pentapetalae</taxon>
        <taxon>asterids</taxon>
        <taxon>campanulids</taxon>
        <taxon>Apiales</taxon>
        <taxon>Apiaceae</taxon>
        <taxon>Apioideae</taxon>
        <taxon>Scandiceae</taxon>
        <taxon>Daucinae</taxon>
        <taxon>Daucus</taxon>
        <taxon>Daucus sect. Daucus</taxon>
    </lineage>
</organism>
<geneLocation type="chloroplast"/>